<dbReference type="EC" id="6.3.4.20" evidence="1"/>
<dbReference type="EMBL" id="AE017282">
    <property type="protein sequence ID" value="AAU92496.1"/>
    <property type="molecule type" value="Genomic_DNA"/>
</dbReference>
<dbReference type="RefSeq" id="WP_010960517.1">
    <property type="nucleotide sequence ID" value="NC_002977.6"/>
</dbReference>
<dbReference type="SMR" id="Q609K0"/>
<dbReference type="STRING" id="243233.MCA1233"/>
<dbReference type="GeneID" id="88223518"/>
<dbReference type="KEGG" id="mca:MCA1233"/>
<dbReference type="eggNOG" id="COG0603">
    <property type="taxonomic scope" value="Bacteria"/>
</dbReference>
<dbReference type="HOGENOM" id="CLU_081854_1_1_6"/>
<dbReference type="UniPathway" id="UPA00391"/>
<dbReference type="Proteomes" id="UP000006821">
    <property type="component" value="Chromosome"/>
</dbReference>
<dbReference type="GO" id="GO:0005524">
    <property type="term" value="F:ATP binding"/>
    <property type="evidence" value="ECO:0007669"/>
    <property type="project" value="UniProtKB-UniRule"/>
</dbReference>
<dbReference type="GO" id="GO:0016879">
    <property type="term" value="F:ligase activity, forming carbon-nitrogen bonds"/>
    <property type="evidence" value="ECO:0007669"/>
    <property type="project" value="UniProtKB-UniRule"/>
</dbReference>
<dbReference type="GO" id="GO:0008270">
    <property type="term" value="F:zinc ion binding"/>
    <property type="evidence" value="ECO:0007669"/>
    <property type="project" value="UniProtKB-UniRule"/>
</dbReference>
<dbReference type="GO" id="GO:0008616">
    <property type="term" value="P:queuosine biosynthetic process"/>
    <property type="evidence" value="ECO:0007669"/>
    <property type="project" value="UniProtKB-UniRule"/>
</dbReference>
<dbReference type="CDD" id="cd01995">
    <property type="entry name" value="QueC-like"/>
    <property type="match status" value="1"/>
</dbReference>
<dbReference type="FunFam" id="3.40.50.620:FF:000131">
    <property type="entry name" value="7-cyano-7-deazaguanine synthase"/>
    <property type="match status" value="1"/>
</dbReference>
<dbReference type="Gene3D" id="3.40.50.620">
    <property type="entry name" value="HUPs"/>
    <property type="match status" value="1"/>
</dbReference>
<dbReference type="HAMAP" id="MF_01633">
    <property type="entry name" value="QueC"/>
    <property type="match status" value="1"/>
</dbReference>
<dbReference type="InterPro" id="IPR018317">
    <property type="entry name" value="QueC"/>
</dbReference>
<dbReference type="InterPro" id="IPR014729">
    <property type="entry name" value="Rossmann-like_a/b/a_fold"/>
</dbReference>
<dbReference type="NCBIfam" id="TIGR00364">
    <property type="entry name" value="7-cyano-7-deazaguanine synthase QueC"/>
    <property type="match status" value="1"/>
</dbReference>
<dbReference type="PANTHER" id="PTHR42914">
    <property type="entry name" value="7-CYANO-7-DEAZAGUANINE SYNTHASE"/>
    <property type="match status" value="1"/>
</dbReference>
<dbReference type="PANTHER" id="PTHR42914:SF1">
    <property type="entry name" value="7-CYANO-7-DEAZAGUANINE SYNTHASE"/>
    <property type="match status" value="1"/>
</dbReference>
<dbReference type="Pfam" id="PF06508">
    <property type="entry name" value="QueC"/>
    <property type="match status" value="1"/>
</dbReference>
<dbReference type="PIRSF" id="PIRSF006293">
    <property type="entry name" value="ExsB"/>
    <property type="match status" value="1"/>
</dbReference>
<dbReference type="SUPFAM" id="SSF52402">
    <property type="entry name" value="Adenine nucleotide alpha hydrolases-like"/>
    <property type="match status" value="1"/>
</dbReference>
<sequence length="223" mass="23823">MKPAVVLLSGGLDSATTLAIARREGFACHAMSFDYGQRHGAELKAARRLAQSLGAIEHKTVHIGLDAIGGSALTDLRIAVPDHPQNGIPVTYVPARNTVFLSFALGWAEVLGALDIFIGVNAVDYSGYPDCRPEFIRAFEQLANLATKVGVEGGRFRIHTPLIDLSKADIIRTGTALGIDYAMTVSCYAADAEGLACGVCDSCRLRRQGFEQAGIADPTRYRS</sequence>
<protein>
    <recommendedName>
        <fullName evidence="1">7-cyano-7-deazaguanine synthase</fullName>
        <ecNumber evidence="1">6.3.4.20</ecNumber>
    </recommendedName>
    <alternativeName>
        <fullName evidence="1">7-cyano-7-carbaguanine synthase</fullName>
    </alternativeName>
    <alternativeName>
        <fullName evidence="1">PreQ(0) synthase</fullName>
    </alternativeName>
    <alternativeName>
        <fullName evidence="1">Queuosine biosynthesis protein QueC</fullName>
    </alternativeName>
</protein>
<feature type="chain" id="PRO_0000246862" description="7-cyano-7-deazaguanine synthase">
    <location>
        <begin position="1"/>
        <end position="223"/>
    </location>
</feature>
<feature type="binding site" evidence="1">
    <location>
        <begin position="8"/>
        <end position="18"/>
    </location>
    <ligand>
        <name>ATP</name>
        <dbReference type="ChEBI" id="CHEBI:30616"/>
    </ligand>
</feature>
<feature type="binding site" evidence="1">
    <location>
        <position position="187"/>
    </location>
    <ligand>
        <name>Zn(2+)</name>
        <dbReference type="ChEBI" id="CHEBI:29105"/>
    </ligand>
</feature>
<feature type="binding site" evidence="1">
    <location>
        <position position="197"/>
    </location>
    <ligand>
        <name>Zn(2+)</name>
        <dbReference type="ChEBI" id="CHEBI:29105"/>
    </ligand>
</feature>
<feature type="binding site" evidence="1">
    <location>
        <position position="200"/>
    </location>
    <ligand>
        <name>Zn(2+)</name>
        <dbReference type="ChEBI" id="CHEBI:29105"/>
    </ligand>
</feature>
<feature type="binding site" evidence="1">
    <location>
        <position position="203"/>
    </location>
    <ligand>
        <name>Zn(2+)</name>
        <dbReference type="ChEBI" id="CHEBI:29105"/>
    </ligand>
</feature>
<keyword id="KW-0067">ATP-binding</keyword>
<keyword id="KW-0436">Ligase</keyword>
<keyword id="KW-0479">Metal-binding</keyword>
<keyword id="KW-0547">Nucleotide-binding</keyword>
<keyword id="KW-0671">Queuosine biosynthesis</keyword>
<keyword id="KW-1185">Reference proteome</keyword>
<keyword id="KW-0862">Zinc</keyword>
<evidence type="ECO:0000255" key="1">
    <source>
        <dbReference type="HAMAP-Rule" id="MF_01633"/>
    </source>
</evidence>
<accession>Q609K0</accession>
<organism>
    <name type="scientific">Methylococcus capsulatus (strain ATCC 33009 / NCIMB 11132 / Bath)</name>
    <dbReference type="NCBI Taxonomy" id="243233"/>
    <lineage>
        <taxon>Bacteria</taxon>
        <taxon>Pseudomonadati</taxon>
        <taxon>Pseudomonadota</taxon>
        <taxon>Gammaproteobacteria</taxon>
        <taxon>Methylococcales</taxon>
        <taxon>Methylococcaceae</taxon>
        <taxon>Methylococcus</taxon>
    </lineage>
</organism>
<reference key="1">
    <citation type="journal article" date="2004" name="PLoS Biol.">
        <title>Genomic insights into methanotrophy: the complete genome sequence of Methylococcus capsulatus (Bath).</title>
        <authorList>
            <person name="Ward N.L."/>
            <person name="Larsen O."/>
            <person name="Sakwa J."/>
            <person name="Bruseth L."/>
            <person name="Khouri H.M."/>
            <person name="Durkin A.S."/>
            <person name="Dimitrov G."/>
            <person name="Jiang L."/>
            <person name="Scanlan D."/>
            <person name="Kang K.H."/>
            <person name="Lewis M.R."/>
            <person name="Nelson K.E."/>
            <person name="Methe B.A."/>
            <person name="Wu M."/>
            <person name="Heidelberg J.F."/>
            <person name="Paulsen I.T."/>
            <person name="Fouts D.E."/>
            <person name="Ravel J."/>
            <person name="Tettelin H."/>
            <person name="Ren Q."/>
            <person name="Read T.D."/>
            <person name="DeBoy R.T."/>
            <person name="Seshadri R."/>
            <person name="Salzberg S.L."/>
            <person name="Jensen H.B."/>
            <person name="Birkeland N.K."/>
            <person name="Nelson W.C."/>
            <person name="Dodson R.J."/>
            <person name="Grindhaug S.H."/>
            <person name="Holt I.E."/>
            <person name="Eidhammer I."/>
            <person name="Jonasen I."/>
            <person name="Vanaken S."/>
            <person name="Utterback T.R."/>
            <person name="Feldblyum T.V."/>
            <person name="Fraser C.M."/>
            <person name="Lillehaug J.R."/>
            <person name="Eisen J.A."/>
        </authorList>
    </citation>
    <scope>NUCLEOTIDE SEQUENCE [LARGE SCALE GENOMIC DNA]</scope>
    <source>
        <strain>ATCC 33009 / NCIMB 11132 / Bath</strain>
    </source>
</reference>
<name>QUEC_METCA</name>
<gene>
    <name evidence="1" type="primary">queC</name>
    <name type="ordered locus">MCA1233</name>
</gene>
<proteinExistence type="inferred from homology"/>
<comment type="function">
    <text evidence="1">Catalyzes the ATP-dependent conversion of 7-carboxy-7-deazaguanine (CDG) to 7-cyano-7-deazaguanine (preQ(0)).</text>
</comment>
<comment type="catalytic activity">
    <reaction evidence="1">
        <text>7-carboxy-7-deazaguanine + NH4(+) + ATP = 7-cyano-7-deazaguanine + ADP + phosphate + H2O + H(+)</text>
        <dbReference type="Rhea" id="RHEA:27982"/>
        <dbReference type="ChEBI" id="CHEBI:15377"/>
        <dbReference type="ChEBI" id="CHEBI:15378"/>
        <dbReference type="ChEBI" id="CHEBI:28938"/>
        <dbReference type="ChEBI" id="CHEBI:30616"/>
        <dbReference type="ChEBI" id="CHEBI:43474"/>
        <dbReference type="ChEBI" id="CHEBI:45075"/>
        <dbReference type="ChEBI" id="CHEBI:61036"/>
        <dbReference type="ChEBI" id="CHEBI:456216"/>
        <dbReference type="EC" id="6.3.4.20"/>
    </reaction>
</comment>
<comment type="cofactor">
    <cofactor evidence="1">
        <name>Zn(2+)</name>
        <dbReference type="ChEBI" id="CHEBI:29105"/>
    </cofactor>
    <text evidence="1">Binds 1 zinc ion per subunit.</text>
</comment>
<comment type="pathway">
    <text evidence="1">Purine metabolism; 7-cyano-7-deazaguanine biosynthesis.</text>
</comment>
<comment type="similarity">
    <text evidence="1">Belongs to the QueC family.</text>
</comment>